<protein>
    <recommendedName>
        <fullName>P32 adhesin</fullName>
    </recommendedName>
    <alternativeName>
        <fullName>Cytadhesin P32</fullName>
    </alternativeName>
</protein>
<feature type="chain" id="PRO_0000058132" description="P32 adhesin">
    <location>
        <begin position="1"/>
        <end position="294"/>
    </location>
</feature>
<feature type="transmembrane region" description="Helical" evidence="2">
    <location>
        <begin position="11"/>
        <end position="31"/>
    </location>
</feature>
<feature type="transmembrane region" description="Helical" evidence="2">
    <location>
        <begin position="66"/>
        <end position="86"/>
    </location>
</feature>
<feature type="repeat" description="1">
    <location>
        <begin position="172"/>
        <end position="193"/>
    </location>
</feature>
<feature type="repeat" description="2">
    <location>
        <begin position="194"/>
        <end position="214"/>
    </location>
</feature>
<feature type="region of interest" description="2 X 22 AA repeats">
    <location>
        <begin position="172"/>
        <end position="214"/>
    </location>
</feature>
<feature type="region of interest" description="Disordered" evidence="3">
    <location>
        <begin position="234"/>
        <end position="294"/>
    </location>
</feature>
<feature type="compositionally biased region" description="Gly residues" evidence="3">
    <location>
        <begin position="241"/>
        <end position="256"/>
    </location>
</feature>
<feature type="sequence conflict" description="In Ref. 1; AAB02986." evidence="4" ref="1">
    <original>V</original>
    <variation>A</variation>
    <location>
        <position position="21"/>
    </location>
</feature>
<feature type="sequence conflict" description="In Ref. 1." evidence="4" ref="1">
    <original>T</original>
    <variation>TAAVPT</variation>
    <location>
        <position position="125"/>
    </location>
</feature>
<feature type="sequence conflict" description="In Ref. 1." evidence="4" ref="1">
    <original>P</original>
    <variation>PGFNQP</variation>
    <location>
        <position position="152"/>
    </location>
</feature>
<feature type="sequence conflict" description="In Ref. 1; AAB02986." evidence="4" ref="1">
    <original>C</original>
    <variation>G</variation>
    <location>
        <position position="170"/>
    </location>
</feature>
<feature type="sequence conflict" description="In Ref. 1; AAB02986." evidence="4" ref="1">
    <original>Q</original>
    <variation>P</variation>
    <location>
        <position position="176"/>
    </location>
</feature>
<feature type="sequence conflict" description="In Ref. 1; AAB02986." evidence="4" ref="1">
    <original>G</original>
    <variation>V</variation>
    <location>
        <position position="252"/>
    </location>
</feature>
<feature type="sequence conflict" description="In Ref. 1 and 3." evidence="4" ref="1 3">
    <original>T</original>
    <variation>A</variation>
    <location>
        <position position="260"/>
    </location>
</feature>
<feature type="sequence conflict" description="In Ref. 1 and 3." evidence="4" ref="1 3">
    <original>H</original>
    <variation>Y</variation>
    <location>
        <position position="279"/>
    </location>
</feature>
<accession>Q49378</accession>
<dbReference type="EMBL" id="U34842">
    <property type="protein sequence ID" value="AAB02986.1"/>
    <property type="molecule type" value="Genomic_DNA"/>
</dbReference>
<dbReference type="EMBL" id="AE015450">
    <property type="protein sequence ID" value="AAP56529.2"/>
    <property type="molecule type" value="Genomic_DNA"/>
</dbReference>
<dbReference type="PIR" id="T18345">
    <property type="entry name" value="T18345"/>
</dbReference>
<dbReference type="RefSeq" id="WP_011113411.1">
    <property type="nucleotide sequence ID" value="NC_004829.2"/>
</dbReference>
<dbReference type="SMR" id="Q49378"/>
<dbReference type="KEGG" id="mga:MGA_0932"/>
<dbReference type="PATRIC" id="fig|233150.7.peg.196"/>
<dbReference type="HOGENOM" id="CLU_946011_0_0_14"/>
<dbReference type="OrthoDB" id="10007852at2"/>
<dbReference type="Proteomes" id="UP000001418">
    <property type="component" value="Chromosome"/>
</dbReference>
<dbReference type="GO" id="GO:0033111">
    <property type="term" value="C:attachment organelle membrane"/>
    <property type="evidence" value="ECO:0007669"/>
    <property type="project" value="UniProtKB-SubCell"/>
</dbReference>
<dbReference type="GO" id="GO:0042995">
    <property type="term" value="C:cell projection"/>
    <property type="evidence" value="ECO:0007669"/>
    <property type="project" value="UniProtKB-KW"/>
</dbReference>
<dbReference type="GO" id="GO:0005886">
    <property type="term" value="C:plasma membrane"/>
    <property type="evidence" value="ECO:0007669"/>
    <property type="project" value="UniProtKB-KW"/>
</dbReference>
<dbReference type="GO" id="GO:0020035">
    <property type="term" value="P:adhesion of symbiont to microvasculature"/>
    <property type="evidence" value="ECO:0007669"/>
    <property type="project" value="UniProtKB-KW"/>
</dbReference>
<dbReference type="InterPro" id="IPR009896">
    <property type="entry name" value="Cytadhesin_P30/P32"/>
</dbReference>
<dbReference type="Pfam" id="PF07271">
    <property type="entry name" value="Cytadhesin_P30"/>
    <property type="match status" value="1"/>
</dbReference>
<evidence type="ECO:0000250" key="1"/>
<evidence type="ECO:0000255" key="2"/>
<evidence type="ECO:0000256" key="3">
    <source>
        <dbReference type="SAM" id="MobiDB-lite"/>
    </source>
</evidence>
<evidence type="ECO:0000305" key="4"/>
<reference key="1">
    <citation type="journal article" date="1998" name="Infect. Immun.">
        <title>Characterization of MGC2, a Mycoplasma gallisepticum cytadhesin with homology to the Mycoplasma pneumoniae 30-kilodalton protein P30 and Mycoplasma genitalium P32.</title>
        <authorList>
            <person name="Hnatow L.L."/>
            <person name="Keeler C.L. Jr."/>
            <person name="Tessmer L.L."/>
            <person name="Czymmek K."/>
            <person name="Dohms J.E."/>
        </authorList>
    </citation>
    <scope>NUCLEOTIDE SEQUENCE [GENOMIC DNA]</scope>
    <source>
        <strain>S6</strain>
    </source>
</reference>
<reference key="2">
    <citation type="journal article" date="2003" name="Microbiology">
        <title>The complete genome sequence of the avian pathogen Mycoplasma gallisepticum strain R(low).</title>
        <authorList>
            <person name="Papazisi L."/>
            <person name="Gorton T.S."/>
            <person name="Kutish G."/>
            <person name="Markham P.F."/>
            <person name="Browning G.F."/>
            <person name="Nguyen D.K."/>
            <person name="Swartzell S."/>
            <person name="Madan A."/>
            <person name="Mahairas G."/>
            <person name="Geary S.J."/>
        </authorList>
    </citation>
    <scope>NUCLEOTIDE SEQUENCE [LARGE SCALE GENOMIC DNA]</scope>
    <source>
        <strain>R(low / passage 15 / clone 2)</strain>
    </source>
</reference>
<reference key="3">
    <citation type="journal article" date="1996" name="Infect. Immun.">
        <title>Cloning and characterization of a putative cytadhesin gene (mgc1) from Mycoplasma gallisepticum.</title>
        <authorList>
            <person name="Keeler C.L. Jr."/>
            <person name="Hnatow L.L."/>
            <person name="Whetzel P.L."/>
            <person name="Dohms J.E."/>
        </authorList>
    </citation>
    <scope>NUCLEOTIDE SEQUENCE [GENOMIC DNA] OF 260-294</scope>
    <source>
        <strain>S6</strain>
    </source>
</reference>
<sequence length="294" mass="31784">MFSLKKLKSKLVGVSFVFSGVIALGTGVGLTSEHKYEHSPTLVLHEGETNSVGPRKITSEPWFYPVVGAGAGLIVVSLLLGLGIGIPIAKKKERMMIQEREEHQKMVESLGIIEEQNKTEAIEPTEEVNTQEPTQPAGVNVANNPQMGINQPQINPQFGPNPQQRINPQCFGGPMQPNQMGMRPGFNQMPPQMGGMPPNQMGMRPGFNQMPPQMGGMPPRPNFPNQMPNMNQPRPGFRPQPGGGVPMGNKAGGGFNHPGTPMGPNRMNFPNQGMNQPPHMAGPRAGFPPQNGPR</sequence>
<gene>
    <name type="primary">mgc2</name>
    <name type="ordered locus">MYCGA1790</name>
    <name type="ORF">MGA_0932</name>
</gene>
<keyword id="KW-1003">Cell membrane</keyword>
<keyword id="KW-0966">Cell projection</keyword>
<keyword id="KW-0200">Cytadherence</keyword>
<keyword id="KW-0472">Membrane</keyword>
<keyword id="KW-1185">Reference proteome</keyword>
<keyword id="KW-0677">Repeat</keyword>
<keyword id="KW-0812">Transmembrane</keyword>
<keyword id="KW-1133">Transmembrane helix</keyword>
<keyword id="KW-0843">Virulence</keyword>
<proteinExistence type="inferred from homology"/>
<name>P32_MYCGA</name>
<comment type="function">
    <text evidence="1">Adhesin necessary for successful cytadherence and virulence.</text>
</comment>
<comment type="subcellular location">
    <subcellularLocation>
        <location evidence="1">Cell projection</location>
        <location evidence="1">Attachment organelle membrane</location>
        <topology evidence="1">Multi-pass membrane protein</topology>
    </subcellularLocation>
    <text evidence="1">Integral and surface exposed membrane protein that localizes to the membrane at the attachment organelle.</text>
</comment>
<organism>
    <name type="scientific">Mycoplasmoides gallisepticum (strain R(low / passage 15 / clone 2))</name>
    <name type="common">Mycoplasma gallisepticum</name>
    <dbReference type="NCBI Taxonomy" id="710127"/>
    <lineage>
        <taxon>Bacteria</taxon>
        <taxon>Bacillati</taxon>
        <taxon>Mycoplasmatota</taxon>
        <taxon>Mycoplasmoidales</taxon>
        <taxon>Mycoplasmoidaceae</taxon>
        <taxon>Mycoplasmoides</taxon>
    </lineage>
</organism>